<organism>
    <name type="scientific">Xenopus laevis</name>
    <name type="common">African clawed frog</name>
    <dbReference type="NCBI Taxonomy" id="8355"/>
    <lineage>
        <taxon>Eukaryota</taxon>
        <taxon>Metazoa</taxon>
        <taxon>Chordata</taxon>
        <taxon>Craniata</taxon>
        <taxon>Vertebrata</taxon>
        <taxon>Euteleostomi</taxon>
        <taxon>Amphibia</taxon>
        <taxon>Batrachia</taxon>
        <taxon>Anura</taxon>
        <taxon>Pipoidea</taxon>
        <taxon>Pipidae</taxon>
        <taxon>Xenopodinae</taxon>
        <taxon>Xenopus</taxon>
        <taxon>Xenopus</taxon>
    </lineage>
</organism>
<accession>P51645</accession>
<sequence>MGKMFSKIFGNKEMRILMRGLDAAGKTTILYKLKLGQSVTTIPTVGFNVETVTYKNVKFNVWDVGGQDKIRPLWRHYYTGTQGLIFVVDCPDRDRIDEARQELHRIINDREMRDAIILIFANKQDLPDAMKPHEIQEKLGLTRIRDRNWYVQPSCAASGDGLYEGLTWLTSNYKS</sequence>
<reference key="1">
    <citation type="submission" date="1995-07" db="EMBL/GenBank/DDBJ databases">
        <authorList>
            <person name="Boman A.L."/>
        </authorList>
    </citation>
    <scope>NUCLEOTIDE SEQUENCE [MRNA]</scope>
</reference>
<proteinExistence type="evidence at transcript level"/>
<protein>
    <recommendedName>
        <fullName>ADP-ribosylation factor 6</fullName>
        <ecNumber evidence="1">3.6.5.2</ecNumber>
    </recommendedName>
</protein>
<evidence type="ECO:0000250" key="1">
    <source>
        <dbReference type="UniProtKB" id="P62330"/>
    </source>
</evidence>
<evidence type="ECO:0000250" key="2">
    <source>
        <dbReference type="UniProtKB" id="P62331"/>
    </source>
</evidence>
<evidence type="ECO:0000305" key="3"/>
<gene>
    <name type="primary">arf6</name>
</gene>
<keyword id="KW-1003">Cell membrane</keyword>
<keyword id="KW-0966">Cell projection</keyword>
<keyword id="KW-0963">Cytoplasm</keyword>
<keyword id="KW-0221">Differentiation</keyword>
<keyword id="KW-0967">Endosome</keyword>
<keyword id="KW-0931">ER-Golgi transport</keyword>
<keyword id="KW-0333">Golgi apparatus</keyword>
<keyword id="KW-0342">GTP-binding</keyword>
<keyword id="KW-0378">Hydrolase</keyword>
<keyword id="KW-0449">Lipoprotein</keyword>
<keyword id="KW-0472">Membrane</keyword>
<keyword id="KW-0519">Myristate</keyword>
<keyword id="KW-0524">Neurogenesis</keyword>
<keyword id="KW-0547">Nucleotide-binding</keyword>
<keyword id="KW-0653">Protein transport</keyword>
<keyword id="KW-1185">Reference proteome</keyword>
<keyword id="KW-0813">Transport</keyword>
<comment type="function">
    <text evidence="1">GTP-binding protein involved in protein trafficking; regulates endocytic recycling and cytoskeleton remodeling. May modulate vesicle budding and uncoating within the Golgi apparatus. May contribute to the regulation of dendritic branching, filopodia extension and dendritic spine development (By similarity).</text>
</comment>
<comment type="catalytic activity">
    <reaction evidence="1">
        <text>GTP + H2O = GDP + phosphate + H(+)</text>
        <dbReference type="Rhea" id="RHEA:19669"/>
        <dbReference type="ChEBI" id="CHEBI:15377"/>
        <dbReference type="ChEBI" id="CHEBI:15378"/>
        <dbReference type="ChEBI" id="CHEBI:37565"/>
        <dbReference type="ChEBI" id="CHEBI:43474"/>
        <dbReference type="ChEBI" id="CHEBI:58189"/>
        <dbReference type="EC" id="3.6.5.2"/>
    </reaction>
    <physiologicalReaction direction="left-to-right" evidence="1">
        <dbReference type="Rhea" id="RHEA:19670"/>
    </physiologicalReaction>
</comment>
<comment type="subcellular location">
    <subcellularLocation>
        <location evidence="1">Cytoplasm</location>
        <location evidence="1">Cytosol</location>
    </subcellularLocation>
    <subcellularLocation>
        <location evidence="2">Cell membrane</location>
        <topology evidence="1">Lipid-anchor</topology>
    </subcellularLocation>
    <subcellularLocation>
        <location evidence="2">Endosome membrane</location>
        <topology evidence="1">Lipid-anchor</topology>
    </subcellularLocation>
    <subcellularLocation>
        <location evidence="2">Recycling endosome membrane</location>
        <topology evidence="2">Lipid-anchor</topology>
    </subcellularLocation>
    <subcellularLocation>
        <location evidence="2">Cell projection</location>
        <location evidence="2">Filopodium membrane</location>
        <topology evidence="2">Lipid-anchor</topology>
    </subcellularLocation>
    <subcellularLocation>
        <location evidence="1">Cell projection</location>
        <location evidence="1">Ruffle</location>
    </subcellularLocation>
    <subcellularLocation>
        <location evidence="1">Cleavage furrow</location>
    </subcellularLocation>
    <subcellularLocation>
        <location evidence="2">Midbody</location>
        <location evidence="2">Midbody ring</location>
    </subcellularLocation>
    <subcellularLocation>
        <location evidence="2">Golgi apparatus</location>
    </subcellularLocation>
    <text evidence="1 2">Distributed uniformly on the plasma membrane, as well as throughout the cytoplasm during metaphase. Subsequently concentrated at patches in the equatorial region at the onset of cytokinesis, and becomes distributed in the equatorial region concurrent with cleavage furrow ingression. In late stages of cytokinesis, concentrates at the midbody ring/Flemming body. After abscission of the intercellular bridge, incorporated into one of the daughter cells as a midbody remnant and localizes to punctate structures beneath the plasma membrane (By similarity). Recruited to the cell membrane in association with CYTH2 and ARL4C. Colocalizes with DAB2IP at the plasma membrane and endocytic vesicles. Myristoylation is required for proper localization to membranes (By similarity).</text>
</comment>
<comment type="similarity">
    <text evidence="3">Belongs to the small GTPase superfamily. Arf family.</text>
</comment>
<feature type="initiator methionine" description="Removed" evidence="1">
    <location>
        <position position="1"/>
    </location>
</feature>
<feature type="chain" id="PRO_0000207404" description="ADP-ribosylation factor 6">
    <location>
        <begin position="2"/>
        <end position="175"/>
    </location>
</feature>
<feature type="binding site" evidence="1">
    <location>
        <begin position="23"/>
        <end position="28"/>
    </location>
    <ligand>
        <name>GTP</name>
        <dbReference type="ChEBI" id="CHEBI:37565"/>
    </ligand>
</feature>
<feature type="binding site" evidence="1">
    <location>
        <begin position="41"/>
        <end position="44"/>
    </location>
    <ligand>
        <name>GTP</name>
        <dbReference type="ChEBI" id="CHEBI:37565"/>
    </ligand>
</feature>
<feature type="binding site" evidence="1">
    <location>
        <begin position="63"/>
        <end position="67"/>
    </location>
    <ligand>
        <name>GTP</name>
        <dbReference type="ChEBI" id="CHEBI:37565"/>
    </ligand>
</feature>
<feature type="binding site" evidence="1">
    <location>
        <begin position="122"/>
        <end position="125"/>
    </location>
    <ligand>
        <name>GTP</name>
        <dbReference type="ChEBI" id="CHEBI:37565"/>
    </ligand>
</feature>
<feature type="binding site" evidence="1">
    <location>
        <begin position="155"/>
        <end position="156"/>
    </location>
    <ligand>
        <name>GTP</name>
        <dbReference type="ChEBI" id="CHEBI:37565"/>
    </ligand>
</feature>
<feature type="lipid moiety-binding region" description="N-myristoyl glycine" evidence="1">
    <location>
        <position position="2"/>
    </location>
</feature>
<feature type="lipid moiety-binding region" description="N6-myristoyl lysine" evidence="1">
    <location>
        <position position="3"/>
    </location>
</feature>
<dbReference type="EC" id="3.6.5.2" evidence="1"/>
<dbReference type="EMBL" id="U31469">
    <property type="protein sequence ID" value="AAA74952.1"/>
    <property type="molecule type" value="mRNA"/>
</dbReference>
<dbReference type="RefSeq" id="NP_001084094.1">
    <property type="nucleotide sequence ID" value="NM_001090625.1"/>
</dbReference>
<dbReference type="SMR" id="P51645"/>
<dbReference type="DNASU" id="399300"/>
<dbReference type="GeneID" id="399300"/>
<dbReference type="KEGG" id="xla:399300"/>
<dbReference type="AGR" id="Xenbase:XB-GENE-17343122"/>
<dbReference type="CTD" id="399300"/>
<dbReference type="Xenbase" id="XB-GENE-17343122">
    <property type="gene designation" value="arf6.2.S"/>
</dbReference>
<dbReference type="OrthoDB" id="2011769at2759"/>
<dbReference type="Proteomes" id="UP000186698">
    <property type="component" value="Chromosome 8S"/>
</dbReference>
<dbReference type="Bgee" id="399300">
    <property type="expression patterns" value="Expressed in testis and 19 other cell types or tissues"/>
</dbReference>
<dbReference type="GO" id="GO:0032154">
    <property type="term" value="C:cleavage furrow"/>
    <property type="evidence" value="ECO:0007669"/>
    <property type="project" value="UniProtKB-SubCell"/>
</dbReference>
<dbReference type="GO" id="GO:0005737">
    <property type="term" value="C:cytoplasm"/>
    <property type="evidence" value="ECO:0000318"/>
    <property type="project" value="GO_Central"/>
</dbReference>
<dbReference type="GO" id="GO:0005829">
    <property type="term" value="C:cytosol"/>
    <property type="evidence" value="ECO:0000250"/>
    <property type="project" value="UniProtKB"/>
</dbReference>
<dbReference type="GO" id="GO:0030139">
    <property type="term" value="C:endocytic vesicle"/>
    <property type="evidence" value="ECO:0000250"/>
    <property type="project" value="UniProtKB"/>
</dbReference>
<dbReference type="GO" id="GO:0005768">
    <property type="term" value="C:endosome"/>
    <property type="evidence" value="ECO:0000250"/>
    <property type="project" value="UniProtKB"/>
</dbReference>
<dbReference type="GO" id="GO:0031527">
    <property type="term" value="C:filopodium membrane"/>
    <property type="evidence" value="ECO:0007669"/>
    <property type="project" value="UniProtKB-SubCell"/>
</dbReference>
<dbReference type="GO" id="GO:0090543">
    <property type="term" value="C:Flemming body"/>
    <property type="evidence" value="ECO:0007669"/>
    <property type="project" value="UniProtKB-SubCell"/>
</dbReference>
<dbReference type="GO" id="GO:0005794">
    <property type="term" value="C:Golgi apparatus"/>
    <property type="evidence" value="ECO:0007669"/>
    <property type="project" value="UniProtKB-SubCell"/>
</dbReference>
<dbReference type="GO" id="GO:0005886">
    <property type="term" value="C:plasma membrane"/>
    <property type="evidence" value="ECO:0000250"/>
    <property type="project" value="UniProtKB"/>
</dbReference>
<dbReference type="GO" id="GO:0055038">
    <property type="term" value="C:recycling endosome membrane"/>
    <property type="evidence" value="ECO:0000318"/>
    <property type="project" value="GO_Central"/>
</dbReference>
<dbReference type="GO" id="GO:0001726">
    <property type="term" value="C:ruffle"/>
    <property type="evidence" value="ECO:0000318"/>
    <property type="project" value="GO_Central"/>
</dbReference>
<dbReference type="GO" id="GO:0003925">
    <property type="term" value="F:G protein activity"/>
    <property type="evidence" value="ECO:0000250"/>
    <property type="project" value="UniProtKB"/>
</dbReference>
<dbReference type="GO" id="GO:0019003">
    <property type="term" value="F:GDP binding"/>
    <property type="evidence" value="ECO:0000250"/>
    <property type="project" value="UniProtKB"/>
</dbReference>
<dbReference type="GO" id="GO:0005525">
    <property type="term" value="F:GTP binding"/>
    <property type="evidence" value="ECO:0000250"/>
    <property type="project" value="UniProtKB"/>
</dbReference>
<dbReference type="GO" id="GO:0030154">
    <property type="term" value="P:cell differentiation"/>
    <property type="evidence" value="ECO:0007669"/>
    <property type="project" value="UniProtKB-KW"/>
</dbReference>
<dbReference type="GO" id="GO:0006886">
    <property type="term" value="P:intracellular protein transport"/>
    <property type="evidence" value="ECO:0000318"/>
    <property type="project" value="GO_Central"/>
</dbReference>
<dbReference type="GO" id="GO:0007399">
    <property type="term" value="P:nervous system development"/>
    <property type="evidence" value="ECO:0007669"/>
    <property type="project" value="UniProtKB-KW"/>
</dbReference>
<dbReference type="GO" id="GO:0036010">
    <property type="term" value="P:protein localization to endosome"/>
    <property type="evidence" value="ECO:0000318"/>
    <property type="project" value="GO_Central"/>
</dbReference>
<dbReference type="GO" id="GO:0060998">
    <property type="term" value="P:regulation of dendritic spine development"/>
    <property type="evidence" value="ECO:0000318"/>
    <property type="project" value="GO_Central"/>
</dbReference>
<dbReference type="GO" id="GO:0016192">
    <property type="term" value="P:vesicle-mediated transport"/>
    <property type="evidence" value="ECO:0000318"/>
    <property type="project" value="GO_Central"/>
</dbReference>
<dbReference type="CDD" id="cd04149">
    <property type="entry name" value="Arf6"/>
    <property type="match status" value="1"/>
</dbReference>
<dbReference type="FunFam" id="3.40.50.300:FF:000286">
    <property type="entry name" value="ADP-ribosylation factor 6"/>
    <property type="match status" value="1"/>
</dbReference>
<dbReference type="Gene3D" id="3.40.50.300">
    <property type="entry name" value="P-loop containing nucleotide triphosphate hydrolases"/>
    <property type="match status" value="1"/>
</dbReference>
<dbReference type="InterPro" id="IPR041838">
    <property type="entry name" value="Arf6"/>
</dbReference>
<dbReference type="InterPro" id="IPR027417">
    <property type="entry name" value="P-loop_NTPase"/>
</dbReference>
<dbReference type="InterPro" id="IPR005225">
    <property type="entry name" value="Small_GTP-bd"/>
</dbReference>
<dbReference type="InterPro" id="IPR024156">
    <property type="entry name" value="Small_GTPase_ARF"/>
</dbReference>
<dbReference type="InterPro" id="IPR006689">
    <property type="entry name" value="Small_GTPase_ARF/SAR"/>
</dbReference>
<dbReference type="NCBIfam" id="TIGR00231">
    <property type="entry name" value="small_GTP"/>
    <property type="match status" value="1"/>
</dbReference>
<dbReference type="PANTHER" id="PTHR11711">
    <property type="entry name" value="ADP RIBOSYLATION FACTOR-RELATED"/>
    <property type="match status" value="1"/>
</dbReference>
<dbReference type="Pfam" id="PF00025">
    <property type="entry name" value="Arf"/>
    <property type="match status" value="1"/>
</dbReference>
<dbReference type="PRINTS" id="PR00328">
    <property type="entry name" value="SAR1GTPBP"/>
</dbReference>
<dbReference type="SMART" id="SM00177">
    <property type="entry name" value="ARF"/>
    <property type="match status" value="1"/>
</dbReference>
<dbReference type="SMART" id="SM00175">
    <property type="entry name" value="RAB"/>
    <property type="match status" value="1"/>
</dbReference>
<dbReference type="SMART" id="SM00178">
    <property type="entry name" value="SAR"/>
    <property type="match status" value="1"/>
</dbReference>
<dbReference type="SUPFAM" id="SSF52540">
    <property type="entry name" value="P-loop containing nucleoside triphosphate hydrolases"/>
    <property type="match status" value="1"/>
</dbReference>
<dbReference type="PROSITE" id="PS51417">
    <property type="entry name" value="ARF"/>
    <property type="match status" value="1"/>
</dbReference>
<name>ARF6_XENLA</name>